<keyword id="KW-0414">Isoprene biosynthesis</keyword>
<keyword id="KW-0456">Lyase</keyword>
<keyword id="KW-0479">Metal-binding</keyword>
<protein>
    <recommendedName>
        <fullName evidence="1">2-C-methyl-D-erythritol 2,4-cyclodiphosphate synthase</fullName>
        <shortName evidence="1">MECDP-synthase</shortName>
        <shortName evidence="1">MECPP-synthase</shortName>
        <shortName evidence="1">MECPS</shortName>
        <ecNumber evidence="1">4.6.1.12</ecNumber>
    </recommendedName>
</protein>
<evidence type="ECO:0000255" key="1">
    <source>
        <dbReference type="HAMAP-Rule" id="MF_00107"/>
    </source>
</evidence>
<proteinExistence type="inferred from homology"/>
<accession>Q3KLR6</accession>
<gene>
    <name evidence="1" type="primary">ispF</name>
    <name type="ordered locus">CTA_0474</name>
</gene>
<sequence>MTEIPSSFVLPDPEWIYRVGIGQDSHRFLPDEDPKPCILGGIIFENTPGFEANSDGDVVFHAICNAFSSVTHKGILGGLADELLKTKGITDSVVYLQEAVASLKPTQQVSHLAITIEGKRPKLLPQLPSMRKRIAEVLHIPLDSINITATSGEGLTAMGQGYGVQCFCVLTIMEYCRY</sequence>
<dbReference type="EC" id="4.6.1.12" evidence="1"/>
<dbReference type="EMBL" id="CP000051">
    <property type="protein sequence ID" value="AAX50706.1"/>
    <property type="molecule type" value="Genomic_DNA"/>
</dbReference>
<dbReference type="RefSeq" id="WP_011324735.1">
    <property type="nucleotide sequence ID" value="NC_007429.1"/>
</dbReference>
<dbReference type="SMR" id="Q3KLR6"/>
<dbReference type="KEGG" id="cta:CTA_0474"/>
<dbReference type="HOGENOM" id="CLU_084630_2_0_0"/>
<dbReference type="UniPathway" id="UPA00056">
    <property type="reaction ID" value="UER00095"/>
</dbReference>
<dbReference type="Proteomes" id="UP000002532">
    <property type="component" value="Chromosome"/>
</dbReference>
<dbReference type="GO" id="GO:0008685">
    <property type="term" value="F:2-C-methyl-D-erythritol 2,4-cyclodiphosphate synthase activity"/>
    <property type="evidence" value="ECO:0007669"/>
    <property type="project" value="UniProtKB-UniRule"/>
</dbReference>
<dbReference type="GO" id="GO:0046872">
    <property type="term" value="F:metal ion binding"/>
    <property type="evidence" value="ECO:0007669"/>
    <property type="project" value="UniProtKB-KW"/>
</dbReference>
<dbReference type="GO" id="GO:0019288">
    <property type="term" value="P:isopentenyl diphosphate biosynthetic process, methylerythritol 4-phosphate pathway"/>
    <property type="evidence" value="ECO:0007669"/>
    <property type="project" value="UniProtKB-UniRule"/>
</dbReference>
<dbReference type="GO" id="GO:0016114">
    <property type="term" value="P:terpenoid biosynthetic process"/>
    <property type="evidence" value="ECO:0007669"/>
    <property type="project" value="InterPro"/>
</dbReference>
<dbReference type="CDD" id="cd00554">
    <property type="entry name" value="MECDP_synthase"/>
    <property type="match status" value="1"/>
</dbReference>
<dbReference type="Gene3D" id="3.30.1330.50">
    <property type="entry name" value="2-C-methyl-D-erythritol 2,4-cyclodiphosphate synthase"/>
    <property type="match status" value="1"/>
</dbReference>
<dbReference type="HAMAP" id="MF_00107">
    <property type="entry name" value="IspF"/>
    <property type="match status" value="1"/>
</dbReference>
<dbReference type="InterPro" id="IPR003526">
    <property type="entry name" value="MECDP_synthase"/>
</dbReference>
<dbReference type="InterPro" id="IPR020555">
    <property type="entry name" value="MECDP_synthase_CS"/>
</dbReference>
<dbReference type="InterPro" id="IPR036571">
    <property type="entry name" value="MECDP_synthase_sf"/>
</dbReference>
<dbReference type="NCBIfam" id="TIGR00151">
    <property type="entry name" value="ispF"/>
    <property type="match status" value="1"/>
</dbReference>
<dbReference type="PANTHER" id="PTHR43181">
    <property type="entry name" value="2-C-METHYL-D-ERYTHRITOL 2,4-CYCLODIPHOSPHATE SYNTHASE, CHLOROPLASTIC"/>
    <property type="match status" value="1"/>
</dbReference>
<dbReference type="PANTHER" id="PTHR43181:SF1">
    <property type="entry name" value="2-C-METHYL-D-ERYTHRITOL 2,4-CYCLODIPHOSPHATE SYNTHASE, CHLOROPLASTIC"/>
    <property type="match status" value="1"/>
</dbReference>
<dbReference type="Pfam" id="PF02542">
    <property type="entry name" value="YgbB"/>
    <property type="match status" value="1"/>
</dbReference>
<dbReference type="SUPFAM" id="SSF69765">
    <property type="entry name" value="IpsF-like"/>
    <property type="match status" value="1"/>
</dbReference>
<dbReference type="PROSITE" id="PS01350">
    <property type="entry name" value="ISPF"/>
    <property type="match status" value="1"/>
</dbReference>
<organism>
    <name type="scientific">Chlamydia trachomatis serovar A (strain ATCC VR-571B / DSM 19440 / HAR-13)</name>
    <dbReference type="NCBI Taxonomy" id="315277"/>
    <lineage>
        <taxon>Bacteria</taxon>
        <taxon>Pseudomonadati</taxon>
        <taxon>Chlamydiota</taxon>
        <taxon>Chlamydiia</taxon>
        <taxon>Chlamydiales</taxon>
        <taxon>Chlamydiaceae</taxon>
        <taxon>Chlamydia/Chlamydophila group</taxon>
        <taxon>Chlamydia</taxon>
    </lineage>
</organism>
<name>ISPF_CHLTA</name>
<comment type="function">
    <text evidence="1">Involved in the biosynthesis of isopentenyl diphosphate (IPP) and dimethylallyl diphosphate (DMAPP), two major building blocks of isoprenoid compounds. Catalyzes the conversion of 4-diphosphocytidyl-2-C-methyl-D-erythritol 2-phosphate (CDP-ME2P) to 2-C-methyl-D-erythritol 2,4-cyclodiphosphate (ME-CPP) with a corresponding release of cytidine 5-monophosphate (CMP).</text>
</comment>
<comment type="catalytic activity">
    <reaction evidence="1">
        <text>4-CDP-2-C-methyl-D-erythritol 2-phosphate = 2-C-methyl-D-erythritol 2,4-cyclic diphosphate + CMP</text>
        <dbReference type="Rhea" id="RHEA:23864"/>
        <dbReference type="ChEBI" id="CHEBI:57919"/>
        <dbReference type="ChEBI" id="CHEBI:58483"/>
        <dbReference type="ChEBI" id="CHEBI:60377"/>
        <dbReference type="EC" id="4.6.1.12"/>
    </reaction>
</comment>
<comment type="cofactor">
    <cofactor evidence="1">
        <name>a divalent metal cation</name>
        <dbReference type="ChEBI" id="CHEBI:60240"/>
    </cofactor>
    <text evidence="1">Binds 1 divalent metal cation per subunit.</text>
</comment>
<comment type="pathway">
    <text evidence="1">Isoprenoid biosynthesis; isopentenyl diphosphate biosynthesis via DXP pathway; isopentenyl diphosphate from 1-deoxy-D-xylulose 5-phosphate: step 4/6.</text>
</comment>
<comment type="subunit">
    <text evidence="1">Homotrimer.</text>
</comment>
<comment type="similarity">
    <text evidence="1">Belongs to the IspF family.</text>
</comment>
<feature type="chain" id="PRO_0000237714" description="2-C-methyl-D-erythritol 2,4-cyclodiphosphate synthase">
    <location>
        <begin position="1"/>
        <end position="178"/>
    </location>
</feature>
<feature type="binding site" evidence="1">
    <location>
        <begin position="24"/>
        <end position="26"/>
    </location>
    <ligand>
        <name>4-CDP-2-C-methyl-D-erythritol 2-phosphate</name>
        <dbReference type="ChEBI" id="CHEBI:57919"/>
    </ligand>
</feature>
<feature type="binding site" evidence="1">
    <location>
        <position position="24"/>
    </location>
    <ligand>
        <name>a divalent metal cation</name>
        <dbReference type="ChEBI" id="CHEBI:60240"/>
    </ligand>
</feature>
<feature type="binding site" evidence="1">
    <location>
        <position position="26"/>
    </location>
    <ligand>
        <name>a divalent metal cation</name>
        <dbReference type="ChEBI" id="CHEBI:60240"/>
    </ligand>
</feature>
<feature type="binding site" evidence="1">
    <location>
        <position position="61"/>
    </location>
    <ligand>
        <name>a divalent metal cation</name>
        <dbReference type="ChEBI" id="CHEBI:60240"/>
    </ligand>
</feature>
<feature type="binding site" evidence="1">
    <location>
        <begin position="150"/>
        <end position="153"/>
    </location>
    <ligand>
        <name>4-CDP-2-C-methyl-D-erythritol 2-phosphate</name>
        <dbReference type="ChEBI" id="CHEBI:57919"/>
    </ligand>
</feature>
<feature type="site" description="Transition state stabilizer" evidence="1">
    <location>
        <position position="53"/>
    </location>
</feature>
<feature type="site" description="Transition state stabilizer" evidence="1">
    <location>
        <position position="151"/>
    </location>
</feature>
<reference key="1">
    <citation type="journal article" date="2005" name="Infect. Immun.">
        <title>Comparative genomic analysis of Chlamydia trachomatis oculotropic and genitotropic strains.</title>
        <authorList>
            <person name="Carlson J.H."/>
            <person name="Porcella S.F."/>
            <person name="McClarty G."/>
            <person name="Caldwell H.D."/>
        </authorList>
    </citation>
    <scope>NUCLEOTIDE SEQUENCE [LARGE SCALE GENOMIC DNA]</scope>
    <source>
        <strain>ATCC VR-571B / DSM 19440 / HAR-13</strain>
    </source>
</reference>